<sequence length="86" mass="9272">MKTILQLLVRAYQLGISPFLGQNCRFYPSCSSYAIEALEEHGALKGSFLATKRLCKCHPWHAGGVDPVPKKSSSKTSTTACGCGHS</sequence>
<dbReference type="EMBL" id="CP000269">
    <property type="protein sequence ID" value="ABR91507.1"/>
    <property type="molecule type" value="Genomic_DNA"/>
</dbReference>
<dbReference type="STRING" id="375286.mma_3695"/>
<dbReference type="KEGG" id="mms:mma_3695"/>
<dbReference type="eggNOG" id="COG0759">
    <property type="taxonomic scope" value="Bacteria"/>
</dbReference>
<dbReference type="HOGENOM" id="CLU_144811_2_2_4"/>
<dbReference type="OrthoDB" id="9801753at2"/>
<dbReference type="Proteomes" id="UP000006388">
    <property type="component" value="Chromosome"/>
</dbReference>
<dbReference type="GO" id="GO:0005886">
    <property type="term" value="C:plasma membrane"/>
    <property type="evidence" value="ECO:0007669"/>
    <property type="project" value="UniProtKB-SubCell"/>
</dbReference>
<dbReference type="HAMAP" id="MF_00386">
    <property type="entry name" value="UPF0161_YidD"/>
    <property type="match status" value="1"/>
</dbReference>
<dbReference type="InterPro" id="IPR002696">
    <property type="entry name" value="Membr_insert_effic_factor_YidD"/>
</dbReference>
<dbReference type="NCBIfam" id="TIGR00278">
    <property type="entry name" value="membrane protein insertion efficiency factor YidD"/>
    <property type="match status" value="1"/>
</dbReference>
<dbReference type="PANTHER" id="PTHR33383">
    <property type="entry name" value="MEMBRANE PROTEIN INSERTION EFFICIENCY FACTOR-RELATED"/>
    <property type="match status" value="1"/>
</dbReference>
<dbReference type="PANTHER" id="PTHR33383:SF1">
    <property type="entry name" value="MEMBRANE PROTEIN INSERTION EFFICIENCY FACTOR-RELATED"/>
    <property type="match status" value="1"/>
</dbReference>
<dbReference type="Pfam" id="PF01809">
    <property type="entry name" value="YidD"/>
    <property type="match status" value="1"/>
</dbReference>
<dbReference type="SMART" id="SM01234">
    <property type="entry name" value="Haemolytic"/>
    <property type="match status" value="1"/>
</dbReference>
<accession>A6T4D8</accession>
<protein>
    <recommendedName>
        <fullName evidence="1">Putative membrane protein insertion efficiency factor</fullName>
    </recommendedName>
</protein>
<keyword id="KW-0997">Cell inner membrane</keyword>
<keyword id="KW-1003">Cell membrane</keyword>
<keyword id="KW-0472">Membrane</keyword>
<feature type="chain" id="PRO_1000060724" description="Putative membrane protein insertion efficiency factor">
    <location>
        <begin position="1"/>
        <end position="86"/>
    </location>
</feature>
<feature type="region of interest" description="Disordered" evidence="2">
    <location>
        <begin position="64"/>
        <end position="86"/>
    </location>
</feature>
<feature type="compositionally biased region" description="Low complexity" evidence="2">
    <location>
        <begin position="70"/>
        <end position="79"/>
    </location>
</feature>
<organism>
    <name type="scientific">Janthinobacterium sp. (strain Marseille)</name>
    <name type="common">Minibacterium massiliensis</name>
    <dbReference type="NCBI Taxonomy" id="375286"/>
    <lineage>
        <taxon>Bacteria</taxon>
        <taxon>Pseudomonadati</taxon>
        <taxon>Pseudomonadota</taxon>
        <taxon>Betaproteobacteria</taxon>
        <taxon>Burkholderiales</taxon>
        <taxon>Oxalobacteraceae</taxon>
        <taxon>Janthinobacterium</taxon>
    </lineage>
</organism>
<reference key="1">
    <citation type="journal article" date="2007" name="PLoS Genet.">
        <title>Genome analysis of Minibacterium massiliensis highlights the convergent evolution of water-living bacteria.</title>
        <authorList>
            <person name="Audic S."/>
            <person name="Robert C."/>
            <person name="Campagna B."/>
            <person name="Parinello H."/>
            <person name="Claverie J.-M."/>
            <person name="Raoult D."/>
            <person name="Drancourt M."/>
        </authorList>
    </citation>
    <scope>NUCLEOTIDE SEQUENCE [LARGE SCALE GENOMIC DNA]</scope>
    <source>
        <strain>Marseille</strain>
    </source>
</reference>
<name>YIDD_JANMA</name>
<comment type="function">
    <text evidence="1">Could be involved in insertion of integral membrane proteins into the membrane.</text>
</comment>
<comment type="subcellular location">
    <subcellularLocation>
        <location evidence="1">Cell inner membrane</location>
        <topology evidence="1">Peripheral membrane protein</topology>
        <orientation evidence="1">Cytoplasmic side</orientation>
    </subcellularLocation>
</comment>
<comment type="similarity">
    <text evidence="1">Belongs to the UPF0161 family.</text>
</comment>
<evidence type="ECO:0000255" key="1">
    <source>
        <dbReference type="HAMAP-Rule" id="MF_00386"/>
    </source>
</evidence>
<evidence type="ECO:0000256" key="2">
    <source>
        <dbReference type="SAM" id="MobiDB-lite"/>
    </source>
</evidence>
<gene>
    <name type="ordered locus">mma_3695</name>
</gene>
<proteinExistence type="inferred from homology"/>